<feature type="chain" id="PRO_1000017782" description="Methylglyoxal synthase">
    <location>
        <begin position="1"/>
        <end position="152"/>
    </location>
</feature>
<feature type="domain" description="MGS-like" evidence="1">
    <location>
        <begin position="6"/>
        <end position="152"/>
    </location>
</feature>
<feature type="active site" description="Proton donor/acceptor" evidence="1">
    <location>
        <position position="71"/>
    </location>
</feature>
<feature type="binding site" evidence="1">
    <location>
        <position position="19"/>
    </location>
    <ligand>
        <name>substrate</name>
    </ligand>
</feature>
<feature type="binding site" evidence="1">
    <location>
        <position position="23"/>
    </location>
    <ligand>
        <name>substrate</name>
    </ligand>
</feature>
<feature type="binding site" evidence="1">
    <location>
        <begin position="45"/>
        <end position="48"/>
    </location>
    <ligand>
        <name>substrate</name>
    </ligand>
</feature>
<feature type="binding site" evidence="1">
    <location>
        <begin position="65"/>
        <end position="66"/>
    </location>
    <ligand>
        <name>substrate</name>
    </ligand>
</feature>
<feature type="binding site" evidence="1">
    <location>
        <position position="98"/>
    </location>
    <ligand>
        <name>substrate</name>
    </ligand>
</feature>
<evidence type="ECO:0000255" key="1">
    <source>
        <dbReference type="HAMAP-Rule" id="MF_00549"/>
    </source>
</evidence>
<proteinExistence type="inferred from homology"/>
<protein>
    <recommendedName>
        <fullName evidence="1">Methylglyoxal synthase</fullName>
        <shortName evidence="1">MGS</shortName>
        <ecNumber evidence="1">4.2.3.3</ecNumber>
    </recommendedName>
</protein>
<organism>
    <name type="scientific">Aeromonas salmonicida (strain A449)</name>
    <dbReference type="NCBI Taxonomy" id="382245"/>
    <lineage>
        <taxon>Bacteria</taxon>
        <taxon>Pseudomonadati</taxon>
        <taxon>Pseudomonadota</taxon>
        <taxon>Gammaproteobacteria</taxon>
        <taxon>Aeromonadales</taxon>
        <taxon>Aeromonadaceae</taxon>
        <taxon>Aeromonas</taxon>
    </lineage>
</organism>
<name>MGSA_AERS4</name>
<comment type="function">
    <text evidence="1">Catalyzes the formation of methylglyoxal from dihydroxyacetone phosphate.</text>
</comment>
<comment type="catalytic activity">
    <reaction evidence="1">
        <text>dihydroxyacetone phosphate = methylglyoxal + phosphate</text>
        <dbReference type="Rhea" id="RHEA:17937"/>
        <dbReference type="ChEBI" id="CHEBI:17158"/>
        <dbReference type="ChEBI" id="CHEBI:43474"/>
        <dbReference type="ChEBI" id="CHEBI:57642"/>
        <dbReference type="EC" id="4.2.3.3"/>
    </reaction>
</comment>
<comment type="similarity">
    <text evidence="1">Belongs to the methylglyoxal synthase family.</text>
</comment>
<reference key="1">
    <citation type="journal article" date="2008" name="BMC Genomics">
        <title>The genome of Aeromonas salmonicida subsp. salmonicida A449: insights into the evolution of a fish pathogen.</title>
        <authorList>
            <person name="Reith M.E."/>
            <person name="Singh R.K."/>
            <person name="Curtis B."/>
            <person name="Boyd J.M."/>
            <person name="Bouevitch A."/>
            <person name="Kimball J."/>
            <person name="Munholland J."/>
            <person name="Murphy C."/>
            <person name="Sarty D."/>
            <person name="Williams J."/>
            <person name="Nash J.H."/>
            <person name="Johnson S.C."/>
            <person name="Brown L.L."/>
        </authorList>
    </citation>
    <scope>NUCLEOTIDE SEQUENCE [LARGE SCALE GENOMIC DNA]</scope>
    <source>
        <strain>A449</strain>
    </source>
</reference>
<dbReference type="EC" id="4.2.3.3" evidence="1"/>
<dbReference type="EMBL" id="CP000644">
    <property type="protein sequence ID" value="ABO88641.1"/>
    <property type="molecule type" value="Genomic_DNA"/>
</dbReference>
<dbReference type="RefSeq" id="WP_005314064.1">
    <property type="nucleotide sequence ID" value="NC_009348.1"/>
</dbReference>
<dbReference type="SMR" id="A4SIB9"/>
<dbReference type="STRING" id="29491.GCA_000820065_02928"/>
<dbReference type="KEGG" id="asa:ASA_0469"/>
<dbReference type="PATRIC" id="fig|382245.13.peg.473"/>
<dbReference type="eggNOG" id="COG1803">
    <property type="taxonomic scope" value="Bacteria"/>
</dbReference>
<dbReference type="HOGENOM" id="CLU_120420_0_1_6"/>
<dbReference type="Proteomes" id="UP000000225">
    <property type="component" value="Chromosome"/>
</dbReference>
<dbReference type="GO" id="GO:0005829">
    <property type="term" value="C:cytosol"/>
    <property type="evidence" value="ECO:0007669"/>
    <property type="project" value="TreeGrafter"/>
</dbReference>
<dbReference type="GO" id="GO:0008929">
    <property type="term" value="F:methylglyoxal synthase activity"/>
    <property type="evidence" value="ECO:0007669"/>
    <property type="project" value="UniProtKB-UniRule"/>
</dbReference>
<dbReference type="GO" id="GO:0019242">
    <property type="term" value="P:methylglyoxal biosynthetic process"/>
    <property type="evidence" value="ECO:0007669"/>
    <property type="project" value="UniProtKB-UniRule"/>
</dbReference>
<dbReference type="CDD" id="cd01422">
    <property type="entry name" value="MGS"/>
    <property type="match status" value="1"/>
</dbReference>
<dbReference type="Gene3D" id="3.40.50.1380">
    <property type="entry name" value="Methylglyoxal synthase-like domain"/>
    <property type="match status" value="1"/>
</dbReference>
<dbReference type="HAMAP" id="MF_00549">
    <property type="entry name" value="Methylglyoxal_synth"/>
    <property type="match status" value="1"/>
</dbReference>
<dbReference type="InterPro" id="IPR004363">
    <property type="entry name" value="Methylgl_synth"/>
</dbReference>
<dbReference type="InterPro" id="IPR018148">
    <property type="entry name" value="Methylglyoxal_synth_AS"/>
</dbReference>
<dbReference type="InterPro" id="IPR011607">
    <property type="entry name" value="MGS-like_dom"/>
</dbReference>
<dbReference type="InterPro" id="IPR036914">
    <property type="entry name" value="MGS-like_dom_sf"/>
</dbReference>
<dbReference type="NCBIfam" id="TIGR00160">
    <property type="entry name" value="MGSA"/>
    <property type="match status" value="1"/>
</dbReference>
<dbReference type="NCBIfam" id="NF003559">
    <property type="entry name" value="PRK05234.1"/>
    <property type="match status" value="1"/>
</dbReference>
<dbReference type="PANTHER" id="PTHR30492">
    <property type="entry name" value="METHYLGLYOXAL SYNTHASE"/>
    <property type="match status" value="1"/>
</dbReference>
<dbReference type="PANTHER" id="PTHR30492:SF0">
    <property type="entry name" value="METHYLGLYOXAL SYNTHASE"/>
    <property type="match status" value="1"/>
</dbReference>
<dbReference type="Pfam" id="PF02142">
    <property type="entry name" value="MGS"/>
    <property type="match status" value="1"/>
</dbReference>
<dbReference type="PIRSF" id="PIRSF006614">
    <property type="entry name" value="Methylglyox_syn"/>
    <property type="match status" value="1"/>
</dbReference>
<dbReference type="SMART" id="SM00851">
    <property type="entry name" value="MGS"/>
    <property type="match status" value="1"/>
</dbReference>
<dbReference type="SUPFAM" id="SSF52335">
    <property type="entry name" value="Methylglyoxal synthase-like"/>
    <property type="match status" value="1"/>
</dbReference>
<dbReference type="PROSITE" id="PS01335">
    <property type="entry name" value="METHYLGLYOXAL_SYNTH"/>
    <property type="match status" value="1"/>
</dbReference>
<dbReference type="PROSITE" id="PS51855">
    <property type="entry name" value="MGS"/>
    <property type="match status" value="1"/>
</dbReference>
<keyword id="KW-0456">Lyase</keyword>
<gene>
    <name evidence="1" type="primary">mgsA</name>
    <name type="ordered locus">ASA_0469</name>
</gene>
<accession>A4SIB9</accession>
<sequence>MELIAREMAPHKRVALVAHDNMKTPLLNWVMRRKEELKLHHLYATGTTGTMLGKQAQLLITCLFSGPMGGDQQLGALIAEGKIDVLIFFWDPLNAVPHDPDVKALLRLAAVWNIPVATNEATADFIMDCPHMRQAFSVQIPDYAGYLKARTE</sequence>